<feature type="chain" id="PRO_0000174912" description="Co-chaperonin GroES">
    <location>
        <begin position="1"/>
        <end position="95"/>
    </location>
</feature>
<feature type="sequence conflict" description="In Ref. 1; AAA62398." evidence="2" ref="1">
    <original>E</original>
    <variation>R</variation>
    <location>
        <position position="33"/>
    </location>
</feature>
<evidence type="ECO:0000255" key="1">
    <source>
        <dbReference type="HAMAP-Rule" id="MF_00580"/>
    </source>
</evidence>
<evidence type="ECO:0000305" key="2"/>
<organism>
    <name type="scientific">Zymomonas mobilis subsp. mobilis (strain ATCC 31821 / ZM4 / CP4)</name>
    <dbReference type="NCBI Taxonomy" id="264203"/>
    <lineage>
        <taxon>Bacteria</taxon>
        <taxon>Pseudomonadati</taxon>
        <taxon>Pseudomonadota</taxon>
        <taxon>Alphaproteobacteria</taxon>
        <taxon>Sphingomonadales</taxon>
        <taxon>Zymomonadaceae</taxon>
        <taxon>Zymomonas</taxon>
    </lineage>
</organism>
<gene>
    <name evidence="1" type="primary">groES</name>
    <name evidence="1" type="synonym">groS</name>
    <name type="synonym">mopB</name>
    <name type="ordered locus">ZMO1928</name>
</gene>
<dbReference type="EMBL" id="L11654">
    <property type="protein sequence ID" value="AAA62398.1"/>
    <property type="molecule type" value="Genomic_DNA"/>
</dbReference>
<dbReference type="EMBL" id="AE008692">
    <property type="protein sequence ID" value="AAV90552.2"/>
    <property type="status" value="ALT_INIT"/>
    <property type="molecule type" value="Genomic_DNA"/>
</dbReference>
<dbReference type="PIR" id="JC2563">
    <property type="entry name" value="JC2563"/>
</dbReference>
<dbReference type="RefSeq" id="WP_012817583.1">
    <property type="nucleotide sequence ID" value="NZ_CP035711.1"/>
</dbReference>
<dbReference type="SMR" id="P48229"/>
<dbReference type="STRING" id="264203.ZMO1928"/>
<dbReference type="GeneID" id="79904766"/>
<dbReference type="KEGG" id="zmo:ZMO1928"/>
<dbReference type="eggNOG" id="COG0234">
    <property type="taxonomic scope" value="Bacteria"/>
</dbReference>
<dbReference type="HOGENOM" id="CLU_132825_1_0_5"/>
<dbReference type="Proteomes" id="UP000001173">
    <property type="component" value="Chromosome"/>
</dbReference>
<dbReference type="GO" id="GO:0005737">
    <property type="term" value="C:cytoplasm"/>
    <property type="evidence" value="ECO:0007669"/>
    <property type="project" value="UniProtKB-SubCell"/>
</dbReference>
<dbReference type="GO" id="GO:0005524">
    <property type="term" value="F:ATP binding"/>
    <property type="evidence" value="ECO:0007669"/>
    <property type="project" value="InterPro"/>
</dbReference>
<dbReference type="GO" id="GO:0046872">
    <property type="term" value="F:metal ion binding"/>
    <property type="evidence" value="ECO:0007669"/>
    <property type="project" value="TreeGrafter"/>
</dbReference>
<dbReference type="GO" id="GO:0044183">
    <property type="term" value="F:protein folding chaperone"/>
    <property type="evidence" value="ECO:0007669"/>
    <property type="project" value="InterPro"/>
</dbReference>
<dbReference type="GO" id="GO:0051087">
    <property type="term" value="F:protein-folding chaperone binding"/>
    <property type="evidence" value="ECO:0007669"/>
    <property type="project" value="TreeGrafter"/>
</dbReference>
<dbReference type="GO" id="GO:0051082">
    <property type="term" value="F:unfolded protein binding"/>
    <property type="evidence" value="ECO:0007669"/>
    <property type="project" value="TreeGrafter"/>
</dbReference>
<dbReference type="GO" id="GO:0051085">
    <property type="term" value="P:chaperone cofactor-dependent protein refolding"/>
    <property type="evidence" value="ECO:0007669"/>
    <property type="project" value="TreeGrafter"/>
</dbReference>
<dbReference type="CDD" id="cd00320">
    <property type="entry name" value="cpn10"/>
    <property type="match status" value="1"/>
</dbReference>
<dbReference type="FunFam" id="2.30.33.40:FF:000001">
    <property type="entry name" value="10 kDa chaperonin"/>
    <property type="match status" value="1"/>
</dbReference>
<dbReference type="Gene3D" id="2.30.33.40">
    <property type="entry name" value="GroES chaperonin"/>
    <property type="match status" value="1"/>
</dbReference>
<dbReference type="HAMAP" id="MF_00580">
    <property type="entry name" value="CH10"/>
    <property type="match status" value="1"/>
</dbReference>
<dbReference type="InterPro" id="IPR020818">
    <property type="entry name" value="Chaperonin_GroES"/>
</dbReference>
<dbReference type="InterPro" id="IPR037124">
    <property type="entry name" value="Chaperonin_GroES_sf"/>
</dbReference>
<dbReference type="InterPro" id="IPR018369">
    <property type="entry name" value="Chaprnonin_Cpn10_CS"/>
</dbReference>
<dbReference type="InterPro" id="IPR011032">
    <property type="entry name" value="GroES-like_sf"/>
</dbReference>
<dbReference type="NCBIfam" id="NF001527">
    <property type="entry name" value="PRK00364.1-2"/>
    <property type="match status" value="1"/>
</dbReference>
<dbReference type="NCBIfam" id="NF001529">
    <property type="entry name" value="PRK00364.1-5"/>
    <property type="match status" value="1"/>
</dbReference>
<dbReference type="NCBIfam" id="NF001531">
    <property type="entry name" value="PRK00364.2-2"/>
    <property type="match status" value="1"/>
</dbReference>
<dbReference type="NCBIfam" id="NF001533">
    <property type="entry name" value="PRK00364.2-4"/>
    <property type="match status" value="1"/>
</dbReference>
<dbReference type="NCBIfam" id="NF001534">
    <property type="entry name" value="PRK00364.2-5"/>
    <property type="match status" value="1"/>
</dbReference>
<dbReference type="PANTHER" id="PTHR10772">
    <property type="entry name" value="10 KDA HEAT SHOCK PROTEIN"/>
    <property type="match status" value="1"/>
</dbReference>
<dbReference type="PANTHER" id="PTHR10772:SF58">
    <property type="entry name" value="CO-CHAPERONIN GROES"/>
    <property type="match status" value="1"/>
</dbReference>
<dbReference type="Pfam" id="PF00166">
    <property type="entry name" value="Cpn10"/>
    <property type="match status" value="1"/>
</dbReference>
<dbReference type="PRINTS" id="PR00297">
    <property type="entry name" value="CHAPERONIN10"/>
</dbReference>
<dbReference type="SMART" id="SM00883">
    <property type="entry name" value="Cpn10"/>
    <property type="match status" value="1"/>
</dbReference>
<dbReference type="SUPFAM" id="SSF50129">
    <property type="entry name" value="GroES-like"/>
    <property type="match status" value="1"/>
</dbReference>
<dbReference type="PROSITE" id="PS00681">
    <property type="entry name" value="CHAPERONINS_CPN10"/>
    <property type="match status" value="1"/>
</dbReference>
<protein>
    <recommendedName>
        <fullName evidence="1">Co-chaperonin GroES</fullName>
    </recommendedName>
    <alternativeName>
        <fullName evidence="1">10 kDa chaperonin</fullName>
    </alternativeName>
    <alternativeName>
        <fullName evidence="1">Chaperonin-10</fullName>
        <shortName evidence="1">Cpn10</shortName>
    </alternativeName>
</protein>
<keyword id="KW-0143">Chaperone</keyword>
<keyword id="KW-0963">Cytoplasm</keyword>
<keyword id="KW-1185">Reference proteome</keyword>
<reference key="1">
    <citation type="journal article" date="1994" name="Gene">
        <title>Cloning, sequencing and expression of stress genes from the ethanol-producing bacterium Zymomonas mobilis: the groESL operon.</title>
        <authorList>
            <person name="Barbosa M.F."/>
            <person name="Yomano L.P."/>
            <person name="Ingram L.O."/>
        </authorList>
    </citation>
    <scope>NUCLEOTIDE SEQUENCE [GENOMIC DNA]</scope>
    <source>
        <strain>ATCC 31821 / ZM4 / CP4</strain>
    </source>
</reference>
<reference key="2">
    <citation type="journal article" date="2005" name="Nat. Biotechnol.">
        <title>The genome sequence of the ethanologenic bacterium Zymomonas mobilis ZM4.</title>
        <authorList>
            <person name="Seo J.-S."/>
            <person name="Chong H."/>
            <person name="Park H.S."/>
            <person name="Yoon K.-O."/>
            <person name="Jung C."/>
            <person name="Kim J.J."/>
            <person name="Hong J.H."/>
            <person name="Kim H."/>
            <person name="Kim J.-H."/>
            <person name="Kil J.-I."/>
            <person name="Park C.J."/>
            <person name="Oh H.-M."/>
            <person name="Lee J.-S."/>
            <person name="Jin S.-J."/>
            <person name="Um H.-W."/>
            <person name="Lee H.-J."/>
            <person name="Oh S.-J."/>
            <person name="Kim J.Y."/>
            <person name="Kang H.L."/>
            <person name="Lee S.Y."/>
            <person name="Lee K.J."/>
            <person name="Kang H.S."/>
        </authorList>
    </citation>
    <scope>NUCLEOTIDE SEQUENCE [LARGE SCALE GENOMIC DNA]</scope>
    <source>
        <strain>ATCC 31821 / ZM4 / CP4</strain>
    </source>
</reference>
<proteinExistence type="inferred from homology"/>
<comment type="function">
    <text evidence="1">Together with the chaperonin GroEL, plays an essential role in assisting protein folding. The GroEL-GroES system forms a nano-cage that allows encapsulation of the non-native substrate proteins and provides a physical environment optimized to promote and accelerate protein folding. GroES binds to the apical surface of the GroEL ring, thereby capping the opening of the GroEL channel.</text>
</comment>
<comment type="subunit">
    <text evidence="1">Heptamer of 7 subunits arranged in a ring. Interacts with the chaperonin GroEL.</text>
</comment>
<comment type="subcellular location">
    <subcellularLocation>
        <location evidence="1">Cytoplasm</location>
    </subcellularLocation>
</comment>
<comment type="similarity">
    <text evidence="1 2">Belongs to the GroES chaperonin family.</text>
</comment>
<comment type="sequence caution" evidence="2">
    <conflict type="erroneous initiation">
        <sequence resource="EMBL-CDS" id="AAV90552"/>
    </conflict>
</comment>
<sequence length="95" mass="10264">MNFRPLHDRVLVRRVAAEEKTAGGIIIPDTAKEKPQEGEVIAAGNGTHSEDGKVVPLDVKAGDRVLFGKWSGTEVRVDGEDLLIMKESDILGIIS</sequence>
<name>CH10_ZYMMO</name>
<accession>P48229</accession>
<accession>Q5NL58</accession>